<protein>
    <recommendedName>
        <fullName evidence="1">Ribonuclease Z</fullName>
        <shortName evidence="1">RNase Z</shortName>
        <ecNumber evidence="1">3.1.26.11</ecNumber>
    </recommendedName>
    <alternativeName>
        <fullName evidence="1">tRNA 3 endonuclease</fullName>
    </alternativeName>
    <alternativeName>
        <fullName evidence="1">tRNase Z</fullName>
    </alternativeName>
</protein>
<comment type="function">
    <text evidence="1">Zinc phosphodiesterase, which displays some tRNA 3'-processing endonuclease activity. Probably involved in tRNA maturation, by removing a 3'-trailer from precursor tRNA.</text>
</comment>
<comment type="catalytic activity">
    <reaction evidence="1">
        <text>Endonucleolytic cleavage of RNA, removing extra 3' nucleotides from tRNA precursor, generating 3' termini of tRNAs. A 3'-hydroxy group is left at the tRNA terminus and a 5'-phosphoryl group is left at the trailer molecule.</text>
        <dbReference type="EC" id="3.1.26.11"/>
    </reaction>
</comment>
<comment type="cofactor">
    <cofactor evidence="1">
        <name>Zn(2+)</name>
        <dbReference type="ChEBI" id="CHEBI:29105"/>
    </cofactor>
    <text evidence="1">Binds 2 Zn(2+) ions.</text>
</comment>
<comment type="subunit">
    <text evidence="1">Homodimer.</text>
</comment>
<comment type="similarity">
    <text evidence="1">Belongs to the RNase Z family.</text>
</comment>
<proteinExistence type="inferred from homology"/>
<feature type="chain" id="PRO_0000155928" description="Ribonuclease Z">
    <location>
        <begin position="1"/>
        <end position="307"/>
    </location>
</feature>
<feature type="active site" description="Proton acceptor" evidence="1">
    <location>
        <position position="65"/>
    </location>
</feature>
<feature type="binding site" evidence="1">
    <location>
        <position position="61"/>
    </location>
    <ligand>
        <name>Zn(2+)</name>
        <dbReference type="ChEBI" id="CHEBI:29105"/>
        <label>1</label>
        <note>catalytic</note>
    </ligand>
</feature>
<feature type="binding site" evidence="1">
    <location>
        <position position="63"/>
    </location>
    <ligand>
        <name>Zn(2+)</name>
        <dbReference type="ChEBI" id="CHEBI:29105"/>
        <label>1</label>
        <note>catalytic</note>
    </ligand>
</feature>
<feature type="binding site" evidence="1">
    <location>
        <position position="65"/>
    </location>
    <ligand>
        <name>Zn(2+)</name>
        <dbReference type="ChEBI" id="CHEBI:29105"/>
        <label>2</label>
        <note>catalytic</note>
    </ligand>
</feature>
<feature type="binding site" evidence="1">
    <location>
        <position position="66"/>
    </location>
    <ligand>
        <name>Zn(2+)</name>
        <dbReference type="ChEBI" id="CHEBI:29105"/>
        <label>2</label>
        <note>catalytic</note>
    </ligand>
</feature>
<feature type="binding site" evidence="1">
    <location>
        <position position="138"/>
    </location>
    <ligand>
        <name>Zn(2+)</name>
        <dbReference type="ChEBI" id="CHEBI:29105"/>
        <label>1</label>
        <note>catalytic</note>
    </ligand>
</feature>
<feature type="binding site" evidence="1">
    <location>
        <position position="207"/>
    </location>
    <ligand>
        <name>Zn(2+)</name>
        <dbReference type="ChEBI" id="CHEBI:29105"/>
        <label>1</label>
        <note>catalytic</note>
    </ligand>
</feature>
<feature type="binding site" evidence="1">
    <location>
        <position position="207"/>
    </location>
    <ligand>
        <name>Zn(2+)</name>
        <dbReference type="ChEBI" id="CHEBI:29105"/>
        <label>2</label>
        <note>catalytic</note>
    </ligand>
</feature>
<feature type="binding site" evidence="1">
    <location>
        <position position="265"/>
    </location>
    <ligand>
        <name>Zn(2+)</name>
        <dbReference type="ChEBI" id="CHEBI:29105"/>
        <label>2</label>
        <note>catalytic</note>
    </ligand>
</feature>
<dbReference type="EC" id="3.1.26.11" evidence="1"/>
<dbReference type="EMBL" id="AE000666">
    <property type="protein sequence ID" value="AAB86297.1"/>
    <property type="molecule type" value="Genomic_DNA"/>
</dbReference>
<dbReference type="PIR" id="H69111">
    <property type="entry name" value="H69111"/>
</dbReference>
<dbReference type="SMR" id="O27859"/>
<dbReference type="FunCoup" id="O27859">
    <property type="interactions" value="125"/>
</dbReference>
<dbReference type="STRING" id="187420.MTH_1831"/>
<dbReference type="PaxDb" id="187420-MTH_1831"/>
<dbReference type="EnsemblBacteria" id="AAB86297">
    <property type="protein sequence ID" value="AAB86297"/>
    <property type="gene ID" value="MTH_1831"/>
</dbReference>
<dbReference type="KEGG" id="mth:MTH_1831"/>
<dbReference type="PATRIC" id="fig|187420.15.peg.1785"/>
<dbReference type="HOGENOM" id="CLU_031317_2_1_2"/>
<dbReference type="InParanoid" id="O27859"/>
<dbReference type="Proteomes" id="UP000005223">
    <property type="component" value="Chromosome"/>
</dbReference>
<dbReference type="GO" id="GO:0042781">
    <property type="term" value="F:3'-tRNA processing endoribonuclease activity"/>
    <property type="evidence" value="ECO:0007669"/>
    <property type="project" value="UniProtKB-UniRule"/>
</dbReference>
<dbReference type="GO" id="GO:0008270">
    <property type="term" value="F:zinc ion binding"/>
    <property type="evidence" value="ECO:0007669"/>
    <property type="project" value="UniProtKB-UniRule"/>
</dbReference>
<dbReference type="CDD" id="cd07717">
    <property type="entry name" value="RNaseZ_ZiPD-like_MBL-fold"/>
    <property type="match status" value="1"/>
</dbReference>
<dbReference type="FunFam" id="3.60.15.10:FF:000002">
    <property type="entry name" value="Ribonuclease Z"/>
    <property type="match status" value="1"/>
</dbReference>
<dbReference type="Gene3D" id="3.60.15.10">
    <property type="entry name" value="Ribonuclease Z/Hydroxyacylglutathione hydrolase-like"/>
    <property type="match status" value="1"/>
</dbReference>
<dbReference type="HAMAP" id="MF_01818">
    <property type="entry name" value="RNase_Z_BN"/>
    <property type="match status" value="1"/>
</dbReference>
<dbReference type="InterPro" id="IPR001279">
    <property type="entry name" value="Metallo-B-lactamas"/>
</dbReference>
<dbReference type="InterPro" id="IPR036866">
    <property type="entry name" value="RibonucZ/Hydroxyglut_hydro"/>
</dbReference>
<dbReference type="InterPro" id="IPR013471">
    <property type="entry name" value="RNase_Z/BN"/>
</dbReference>
<dbReference type="NCBIfam" id="NF000801">
    <property type="entry name" value="PRK00055.1-3"/>
    <property type="match status" value="1"/>
</dbReference>
<dbReference type="NCBIfam" id="TIGR02651">
    <property type="entry name" value="RNase_Z"/>
    <property type="match status" value="1"/>
</dbReference>
<dbReference type="PANTHER" id="PTHR46018">
    <property type="entry name" value="ZINC PHOSPHODIESTERASE ELAC PROTEIN 1"/>
    <property type="match status" value="1"/>
</dbReference>
<dbReference type="PANTHER" id="PTHR46018:SF2">
    <property type="entry name" value="ZINC PHOSPHODIESTERASE ELAC PROTEIN 1"/>
    <property type="match status" value="1"/>
</dbReference>
<dbReference type="Pfam" id="PF00753">
    <property type="entry name" value="Lactamase_B"/>
    <property type="match status" value="1"/>
</dbReference>
<dbReference type="Pfam" id="PF12706">
    <property type="entry name" value="Lactamase_B_2"/>
    <property type="match status" value="1"/>
</dbReference>
<dbReference type="SMART" id="SM00849">
    <property type="entry name" value="Lactamase_B"/>
    <property type="match status" value="1"/>
</dbReference>
<dbReference type="SUPFAM" id="SSF56281">
    <property type="entry name" value="Metallo-hydrolase/oxidoreductase"/>
    <property type="match status" value="1"/>
</dbReference>
<sequence length="307" mass="33757">MMEVTFLGTSSAVPSKNRNHTSIALRIPGEIFLFDCGEGTQRQMALAGISPMKVTRIFITHLHGDHILGIPGMIQSMGFRGREEPLDIYGPPGIHELHECIMKMGYFTLDFDINVHEVRGGTVVEEDDYRVTSAPASHSVFNLAYCFEEKKRPRFLREKAIALGLKPGPAFGKLHRGIPVRVGDRIIMPEEVLGSPRKGVKVCYSGDTRPCESVIKLAEGAELLIHESTLEAGSEDKAAESGHSTAREAAEVARSAGVKRLILTHLSTRYKRTEVILEAARQVFPVTDVADDLMTVEVKAYDSSPDS</sequence>
<name>RNZ_METTH</name>
<accession>O27859</accession>
<organism>
    <name type="scientific">Methanothermobacter thermautotrophicus (strain ATCC 29096 / DSM 1053 / JCM 10044 / NBRC 100330 / Delta H)</name>
    <name type="common">Methanobacterium thermoautotrophicum</name>
    <dbReference type="NCBI Taxonomy" id="187420"/>
    <lineage>
        <taxon>Archaea</taxon>
        <taxon>Methanobacteriati</taxon>
        <taxon>Methanobacteriota</taxon>
        <taxon>Methanomada group</taxon>
        <taxon>Methanobacteria</taxon>
        <taxon>Methanobacteriales</taxon>
        <taxon>Methanobacteriaceae</taxon>
        <taxon>Methanothermobacter</taxon>
    </lineage>
</organism>
<keyword id="KW-0255">Endonuclease</keyword>
<keyword id="KW-0378">Hydrolase</keyword>
<keyword id="KW-0479">Metal-binding</keyword>
<keyword id="KW-0540">Nuclease</keyword>
<keyword id="KW-1185">Reference proteome</keyword>
<keyword id="KW-0819">tRNA processing</keyword>
<keyword id="KW-0862">Zinc</keyword>
<gene>
    <name evidence="1" type="primary">rnz</name>
    <name type="ordered locus">MTH_1831</name>
</gene>
<reference key="1">
    <citation type="journal article" date="1997" name="J. Bacteriol.">
        <title>Complete genome sequence of Methanobacterium thermoautotrophicum deltaH: functional analysis and comparative genomics.</title>
        <authorList>
            <person name="Smith D.R."/>
            <person name="Doucette-Stamm L.A."/>
            <person name="Deloughery C."/>
            <person name="Lee H.-M."/>
            <person name="Dubois J."/>
            <person name="Aldredge T."/>
            <person name="Bashirzadeh R."/>
            <person name="Blakely D."/>
            <person name="Cook R."/>
            <person name="Gilbert K."/>
            <person name="Harrison D."/>
            <person name="Hoang L."/>
            <person name="Keagle P."/>
            <person name="Lumm W."/>
            <person name="Pothier B."/>
            <person name="Qiu D."/>
            <person name="Spadafora R."/>
            <person name="Vicare R."/>
            <person name="Wang Y."/>
            <person name="Wierzbowski J."/>
            <person name="Gibson R."/>
            <person name="Jiwani N."/>
            <person name="Caruso A."/>
            <person name="Bush D."/>
            <person name="Safer H."/>
            <person name="Patwell D."/>
            <person name="Prabhakar S."/>
            <person name="McDougall S."/>
            <person name="Shimer G."/>
            <person name="Goyal A."/>
            <person name="Pietrovski S."/>
            <person name="Church G.M."/>
            <person name="Daniels C.J."/>
            <person name="Mao J.-I."/>
            <person name="Rice P."/>
            <person name="Noelling J."/>
            <person name="Reeve J.N."/>
        </authorList>
    </citation>
    <scope>NUCLEOTIDE SEQUENCE [LARGE SCALE GENOMIC DNA]</scope>
    <source>
        <strain>ATCC 29096 / DSM 1053 / JCM 10044 / NBRC 100330 / Delta H</strain>
    </source>
</reference>
<evidence type="ECO:0000255" key="1">
    <source>
        <dbReference type="HAMAP-Rule" id="MF_01818"/>
    </source>
</evidence>